<reference key="1">
    <citation type="journal article" date="2004" name="PLoS Biol.">
        <title>Genomic insights into methanotrophy: the complete genome sequence of Methylococcus capsulatus (Bath).</title>
        <authorList>
            <person name="Ward N.L."/>
            <person name="Larsen O."/>
            <person name="Sakwa J."/>
            <person name="Bruseth L."/>
            <person name="Khouri H.M."/>
            <person name="Durkin A.S."/>
            <person name="Dimitrov G."/>
            <person name="Jiang L."/>
            <person name="Scanlan D."/>
            <person name="Kang K.H."/>
            <person name="Lewis M.R."/>
            <person name="Nelson K.E."/>
            <person name="Methe B.A."/>
            <person name="Wu M."/>
            <person name="Heidelberg J.F."/>
            <person name="Paulsen I.T."/>
            <person name="Fouts D.E."/>
            <person name="Ravel J."/>
            <person name="Tettelin H."/>
            <person name="Ren Q."/>
            <person name="Read T.D."/>
            <person name="DeBoy R.T."/>
            <person name="Seshadri R."/>
            <person name="Salzberg S.L."/>
            <person name="Jensen H.B."/>
            <person name="Birkeland N.K."/>
            <person name="Nelson W.C."/>
            <person name="Dodson R.J."/>
            <person name="Grindhaug S.H."/>
            <person name="Holt I.E."/>
            <person name="Eidhammer I."/>
            <person name="Jonasen I."/>
            <person name="Vanaken S."/>
            <person name="Utterback T.R."/>
            <person name="Feldblyum T.V."/>
            <person name="Fraser C.M."/>
            <person name="Lillehaug J.R."/>
            <person name="Eisen J.A."/>
        </authorList>
    </citation>
    <scope>NUCLEOTIDE SEQUENCE [LARGE SCALE GENOMIC DNA]</scope>
    <source>
        <strain>ATCC 33009 / NCIMB 11132 / Bath</strain>
    </source>
</reference>
<accession>Q606J9</accession>
<proteinExistence type="inferred from homology"/>
<keyword id="KW-0474">Menaquinone biosynthesis</keyword>
<keyword id="KW-0489">Methyltransferase</keyword>
<keyword id="KW-1185">Reference proteome</keyword>
<keyword id="KW-0949">S-adenosyl-L-methionine</keyword>
<keyword id="KW-0808">Transferase</keyword>
<keyword id="KW-0831">Ubiquinone biosynthesis</keyword>
<comment type="function">
    <text evidence="1">Methyltransferase required for the conversion of demethylmenaquinol (DMKH2) to menaquinol (MKH2) and the conversion of 2-polyprenyl-6-methoxy-1,4-benzoquinol (DDMQH2) to 2-polyprenyl-3-methyl-6-methoxy-1,4-benzoquinol (DMQH2).</text>
</comment>
<comment type="catalytic activity">
    <reaction evidence="1">
        <text>a 2-demethylmenaquinol + S-adenosyl-L-methionine = a menaquinol + S-adenosyl-L-homocysteine + H(+)</text>
        <dbReference type="Rhea" id="RHEA:42640"/>
        <dbReference type="Rhea" id="RHEA-COMP:9539"/>
        <dbReference type="Rhea" id="RHEA-COMP:9563"/>
        <dbReference type="ChEBI" id="CHEBI:15378"/>
        <dbReference type="ChEBI" id="CHEBI:18151"/>
        <dbReference type="ChEBI" id="CHEBI:55437"/>
        <dbReference type="ChEBI" id="CHEBI:57856"/>
        <dbReference type="ChEBI" id="CHEBI:59789"/>
        <dbReference type="EC" id="2.1.1.163"/>
    </reaction>
</comment>
<comment type="catalytic activity">
    <reaction evidence="1">
        <text>a 2-methoxy-6-(all-trans-polyprenyl)benzene-1,4-diol + S-adenosyl-L-methionine = a 5-methoxy-2-methyl-3-(all-trans-polyprenyl)benzene-1,4-diol + S-adenosyl-L-homocysteine + H(+)</text>
        <dbReference type="Rhea" id="RHEA:28286"/>
        <dbReference type="Rhea" id="RHEA-COMP:10858"/>
        <dbReference type="Rhea" id="RHEA-COMP:10859"/>
        <dbReference type="ChEBI" id="CHEBI:15378"/>
        <dbReference type="ChEBI" id="CHEBI:57856"/>
        <dbReference type="ChEBI" id="CHEBI:59789"/>
        <dbReference type="ChEBI" id="CHEBI:84166"/>
        <dbReference type="ChEBI" id="CHEBI:84167"/>
        <dbReference type="EC" id="2.1.1.201"/>
    </reaction>
</comment>
<comment type="pathway">
    <text evidence="1">Quinol/quinone metabolism; menaquinone biosynthesis; menaquinol from 1,4-dihydroxy-2-naphthoate: step 2/2.</text>
</comment>
<comment type="pathway">
    <text evidence="1">Cofactor biosynthesis; ubiquinone biosynthesis.</text>
</comment>
<comment type="similarity">
    <text evidence="1">Belongs to the class I-like SAM-binding methyltransferase superfamily. MenG/UbiE family.</text>
</comment>
<feature type="chain" id="PRO_0000193294" description="Ubiquinone/menaquinone biosynthesis C-methyltransferase UbiE">
    <location>
        <begin position="1"/>
        <end position="248"/>
    </location>
</feature>
<feature type="binding site" evidence="1">
    <location>
        <position position="71"/>
    </location>
    <ligand>
        <name>S-adenosyl-L-methionine</name>
        <dbReference type="ChEBI" id="CHEBI:59789"/>
    </ligand>
</feature>
<feature type="binding site" evidence="1">
    <location>
        <position position="92"/>
    </location>
    <ligand>
        <name>S-adenosyl-L-methionine</name>
        <dbReference type="ChEBI" id="CHEBI:59789"/>
    </ligand>
</feature>
<feature type="binding site" evidence="1">
    <location>
        <begin position="120"/>
        <end position="121"/>
    </location>
    <ligand>
        <name>S-adenosyl-L-methionine</name>
        <dbReference type="ChEBI" id="CHEBI:59789"/>
    </ligand>
</feature>
<evidence type="ECO:0000255" key="1">
    <source>
        <dbReference type="HAMAP-Rule" id="MF_01813"/>
    </source>
</evidence>
<sequence>MSENTTHFGFRTVPEHEKANMVRAVFDSVAGKYDVMNDLMSIGIHRLWKRIAVDLAHVRSGEKVLDLAGGTGDLTALFRKRVGARGFVVLSDINAEMLRRGRDRIIDDGLAESVAYAQIDAEKLPFPHDSFDCISIGFGLRNVTHKDKALNSMYRALKPGGRLIVLEFSEVHNELLRKAYDLYSFKVLPFLGKLVANDAESYRYLAESIRMHPNQEKLKAMMEKAGFERCEYFDLMQGIVAVHRGYKF</sequence>
<gene>
    <name evidence="1" type="primary">ubiE</name>
    <name type="ordered locus">MCA2017</name>
</gene>
<organism>
    <name type="scientific">Methylococcus capsulatus (strain ATCC 33009 / NCIMB 11132 / Bath)</name>
    <dbReference type="NCBI Taxonomy" id="243233"/>
    <lineage>
        <taxon>Bacteria</taxon>
        <taxon>Pseudomonadati</taxon>
        <taxon>Pseudomonadota</taxon>
        <taxon>Gammaproteobacteria</taxon>
        <taxon>Methylococcales</taxon>
        <taxon>Methylococcaceae</taxon>
        <taxon>Methylococcus</taxon>
    </lineage>
</organism>
<dbReference type="EC" id="2.1.1.163" evidence="1"/>
<dbReference type="EC" id="2.1.1.201" evidence="1"/>
<dbReference type="EMBL" id="AE017282">
    <property type="protein sequence ID" value="AAU91745.1"/>
    <property type="molecule type" value="Genomic_DNA"/>
</dbReference>
<dbReference type="RefSeq" id="WP_010961262.1">
    <property type="nucleotide sequence ID" value="NC_002977.6"/>
</dbReference>
<dbReference type="SMR" id="Q606J9"/>
<dbReference type="STRING" id="243233.MCA2017"/>
<dbReference type="GeneID" id="88224245"/>
<dbReference type="KEGG" id="mca:MCA2017"/>
<dbReference type="eggNOG" id="COG2226">
    <property type="taxonomic scope" value="Bacteria"/>
</dbReference>
<dbReference type="HOGENOM" id="CLU_037990_0_0_6"/>
<dbReference type="UniPathway" id="UPA00079">
    <property type="reaction ID" value="UER00169"/>
</dbReference>
<dbReference type="UniPathway" id="UPA00232"/>
<dbReference type="Proteomes" id="UP000006821">
    <property type="component" value="Chromosome"/>
</dbReference>
<dbReference type="GO" id="GO:0008425">
    <property type="term" value="F:2-methoxy-6-polyprenyl-1,4-benzoquinol methyltransferase activity"/>
    <property type="evidence" value="ECO:0007669"/>
    <property type="project" value="UniProtKB-UniRule"/>
</dbReference>
<dbReference type="GO" id="GO:0043770">
    <property type="term" value="F:demethylmenaquinone methyltransferase activity"/>
    <property type="evidence" value="ECO:0007669"/>
    <property type="project" value="UniProtKB-UniRule"/>
</dbReference>
<dbReference type="GO" id="GO:0009060">
    <property type="term" value="P:aerobic respiration"/>
    <property type="evidence" value="ECO:0007669"/>
    <property type="project" value="UniProtKB-UniRule"/>
</dbReference>
<dbReference type="GO" id="GO:0009234">
    <property type="term" value="P:menaquinone biosynthetic process"/>
    <property type="evidence" value="ECO:0007669"/>
    <property type="project" value="UniProtKB-UniRule"/>
</dbReference>
<dbReference type="GO" id="GO:0032259">
    <property type="term" value="P:methylation"/>
    <property type="evidence" value="ECO:0007669"/>
    <property type="project" value="UniProtKB-KW"/>
</dbReference>
<dbReference type="CDD" id="cd02440">
    <property type="entry name" value="AdoMet_MTases"/>
    <property type="match status" value="1"/>
</dbReference>
<dbReference type="FunFam" id="3.40.50.150:FF:000014">
    <property type="entry name" value="Ubiquinone/menaquinone biosynthesis C-methyltransferase UbiE"/>
    <property type="match status" value="1"/>
</dbReference>
<dbReference type="Gene3D" id="3.40.50.150">
    <property type="entry name" value="Vaccinia Virus protein VP39"/>
    <property type="match status" value="1"/>
</dbReference>
<dbReference type="HAMAP" id="MF_01813">
    <property type="entry name" value="MenG_UbiE_methyltr"/>
    <property type="match status" value="1"/>
</dbReference>
<dbReference type="InterPro" id="IPR029063">
    <property type="entry name" value="SAM-dependent_MTases_sf"/>
</dbReference>
<dbReference type="InterPro" id="IPR004033">
    <property type="entry name" value="UbiE/COQ5_MeTrFase"/>
</dbReference>
<dbReference type="InterPro" id="IPR023576">
    <property type="entry name" value="UbiE/COQ5_MeTrFase_CS"/>
</dbReference>
<dbReference type="NCBIfam" id="TIGR01934">
    <property type="entry name" value="MenG_MenH_UbiE"/>
    <property type="match status" value="1"/>
</dbReference>
<dbReference type="NCBIfam" id="NF001240">
    <property type="entry name" value="PRK00216.1-1"/>
    <property type="match status" value="1"/>
</dbReference>
<dbReference type="NCBIfam" id="NF001244">
    <property type="entry name" value="PRK00216.1-5"/>
    <property type="match status" value="1"/>
</dbReference>
<dbReference type="PANTHER" id="PTHR43591:SF24">
    <property type="entry name" value="2-METHOXY-6-POLYPRENYL-1,4-BENZOQUINOL METHYLASE, MITOCHONDRIAL"/>
    <property type="match status" value="1"/>
</dbReference>
<dbReference type="PANTHER" id="PTHR43591">
    <property type="entry name" value="METHYLTRANSFERASE"/>
    <property type="match status" value="1"/>
</dbReference>
<dbReference type="Pfam" id="PF01209">
    <property type="entry name" value="Ubie_methyltran"/>
    <property type="match status" value="1"/>
</dbReference>
<dbReference type="SUPFAM" id="SSF53335">
    <property type="entry name" value="S-adenosyl-L-methionine-dependent methyltransferases"/>
    <property type="match status" value="1"/>
</dbReference>
<dbReference type="PROSITE" id="PS51608">
    <property type="entry name" value="SAM_MT_UBIE"/>
    <property type="match status" value="1"/>
</dbReference>
<dbReference type="PROSITE" id="PS01183">
    <property type="entry name" value="UBIE_1"/>
    <property type="match status" value="1"/>
</dbReference>
<name>UBIE_METCA</name>
<protein>
    <recommendedName>
        <fullName evidence="1">Ubiquinone/menaquinone biosynthesis C-methyltransferase UbiE</fullName>
        <ecNumber evidence="1">2.1.1.163</ecNumber>
        <ecNumber evidence="1">2.1.1.201</ecNumber>
    </recommendedName>
    <alternativeName>
        <fullName evidence="1">2-methoxy-6-polyprenyl-1,4-benzoquinol methylase</fullName>
    </alternativeName>
    <alternativeName>
        <fullName evidence="1">Demethylmenaquinone methyltransferase</fullName>
    </alternativeName>
</protein>